<sequence>MRSKVTGAKRWVVKIGSALLTADGKGLDRGAMAVWVEQMVALREAGVELVLVSSGAVAAGMSQLGWTTRPSAMNELQAAASLGQMRLVQAWESSFGEHGKHTAQILLTHDDLSDRKRYLNARSTLRTLVDLGVVPVINENDTVVTDEIRFGDNDTLAALVANLVEADLLVILTDRDGMFDADPRNNPEAQLIYEARADDPSLDAVAGGTGGALGRGGMQTKLRAARLAARSGAHTIIIGGRIERVLDRLKAGERLGTLLSPERGMLAARKQWLAGHLQTRGTLVLDAGAVQALRQANKSLLPVGVKTVQGSFRRGEMVVCVGPDGIEVARGLANYSALEAQKIIGQPSDAIESILGYSAEPELVHRDNLVLV</sequence>
<protein>
    <recommendedName>
        <fullName evidence="1">Glutamate 5-kinase</fullName>
        <ecNumber evidence="1">2.7.2.11</ecNumber>
    </recommendedName>
    <alternativeName>
        <fullName evidence="1">Gamma-glutamyl kinase</fullName>
        <shortName evidence="1">GK</shortName>
    </alternativeName>
</protein>
<gene>
    <name evidence="1" type="primary">proB</name>
    <name type="ordered locus">PputGB1_0723</name>
</gene>
<keyword id="KW-0028">Amino-acid biosynthesis</keyword>
<keyword id="KW-0067">ATP-binding</keyword>
<keyword id="KW-0963">Cytoplasm</keyword>
<keyword id="KW-0418">Kinase</keyword>
<keyword id="KW-0547">Nucleotide-binding</keyword>
<keyword id="KW-0641">Proline biosynthesis</keyword>
<keyword id="KW-0808">Transferase</keyword>
<accession>B0KMF7</accession>
<evidence type="ECO:0000255" key="1">
    <source>
        <dbReference type="HAMAP-Rule" id="MF_00456"/>
    </source>
</evidence>
<feature type="chain" id="PRO_1000081096" description="Glutamate 5-kinase">
    <location>
        <begin position="1"/>
        <end position="372"/>
    </location>
</feature>
<feature type="domain" description="PUA" evidence="1">
    <location>
        <begin position="280"/>
        <end position="358"/>
    </location>
</feature>
<feature type="binding site" evidence="1">
    <location>
        <position position="14"/>
    </location>
    <ligand>
        <name>ATP</name>
        <dbReference type="ChEBI" id="CHEBI:30616"/>
    </ligand>
</feature>
<feature type="binding site" evidence="1">
    <location>
        <position position="54"/>
    </location>
    <ligand>
        <name>substrate</name>
    </ligand>
</feature>
<feature type="binding site" evidence="1">
    <location>
        <position position="141"/>
    </location>
    <ligand>
        <name>substrate</name>
    </ligand>
</feature>
<feature type="binding site" evidence="1">
    <location>
        <position position="153"/>
    </location>
    <ligand>
        <name>substrate</name>
    </ligand>
</feature>
<feature type="binding site" evidence="1">
    <location>
        <begin position="173"/>
        <end position="174"/>
    </location>
    <ligand>
        <name>ATP</name>
        <dbReference type="ChEBI" id="CHEBI:30616"/>
    </ligand>
</feature>
<name>PROB_PSEPG</name>
<comment type="function">
    <text evidence="1">Catalyzes the transfer of a phosphate group to glutamate to form L-glutamate 5-phosphate.</text>
</comment>
<comment type="catalytic activity">
    <reaction evidence="1">
        <text>L-glutamate + ATP = L-glutamyl 5-phosphate + ADP</text>
        <dbReference type="Rhea" id="RHEA:14877"/>
        <dbReference type="ChEBI" id="CHEBI:29985"/>
        <dbReference type="ChEBI" id="CHEBI:30616"/>
        <dbReference type="ChEBI" id="CHEBI:58274"/>
        <dbReference type="ChEBI" id="CHEBI:456216"/>
        <dbReference type="EC" id="2.7.2.11"/>
    </reaction>
</comment>
<comment type="pathway">
    <text evidence="1">Amino-acid biosynthesis; L-proline biosynthesis; L-glutamate 5-semialdehyde from L-glutamate: step 1/2.</text>
</comment>
<comment type="subcellular location">
    <subcellularLocation>
        <location evidence="1">Cytoplasm</location>
    </subcellularLocation>
</comment>
<comment type="similarity">
    <text evidence="1">Belongs to the glutamate 5-kinase family.</text>
</comment>
<proteinExistence type="inferred from homology"/>
<reference key="1">
    <citation type="submission" date="2008-01" db="EMBL/GenBank/DDBJ databases">
        <title>Complete sequence of Pseudomonas putida GB-1.</title>
        <authorList>
            <consortium name="US DOE Joint Genome Institute"/>
            <person name="Copeland A."/>
            <person name="Lucas S."/>
            <person name="Lapidus A."/>
            <person name="Barry K."/>
            <person name="Glavina del Rio T."/>
            <person name="Dalin E."/>
            <person name="Tice H."/>
            <person name="Pitluck S."/>
            <person name="Bruce D."/>
            <person name="Goodwin L."/>
            <person name="Chertkov O."/>
            <person name="Brettin T."/>
            <person name="Detter J.C."/>
            <person name="Han C."/>
            <person name="Kuske C.R."/>
            <person name="Schmutz J."/>
            <person name="Larimer F."/>
            <person name="Land M."/>
            <person name="Hauser L."/>
            <person name="Kyrpides N."/>
            <person name="Kim E."/>
            <person name="McCarthy J.K."/>
            <person name="Richardson P."/>
        </authorList>
    </citation>
    <scope>NUCLEOTIDE SEQUENCE [LARGE SCALE GENOMIC DNA]</scope>
    <source>
        <strain>GB-1</strain>
    </source>
</reference>
<organism>
    <name type="scientific">Pseudomonas putida (strain GB-1)</name>
    <dbReference type="NCBI Taxonomy" id="76869"/>
    <lineage>
        <taxon>Bacteria</taxon>
        <taxon>Pseudomonadati</taxon>
        <taxon>Pseudomonadota</taxon>
        <taxon>Gammaproteobacteria</taxon>
        <taxon>Pseudomonadales</taxon>
        <taxon>Pseudomonadaceae</taxon>
        <taxon>Pseudomonas</taxon>
    </lineage>
</organism>
<dbReference type="EC" id="2.7.2.11" evidence="1"/>
<dbReference type="EMBL" id="CP000926">
    <property type="protein sequence ID" value="ABY96633.1"/>
    <property type="molecule type" value="Genomic_DNA"/>
</dbReference>
<dbReference type="RefSeq" id="WP_012270435.1">
    <property type="nucleotide sequence ID" value="NC_010322.1"/>
</dbReference>
<dbReference type="SMR" id="B0KMF7"/>
<dbReference type="KEGG" id="ppg:PputGB1_0723"/>
<dbReference type="eggNOG" id="COG0263">
    <property type="taxonomic scope" value="Bacteria"/>
</dbReference>
<dbReference type="HOGENOM" id="CLU_025400_2_0_6"/>
<dbReference type="UniPathway" id="UPA00098">
    <property type="reaction ID" value="UER00359"/>
</dbReference>
<dbReference type="Proteomes" id="UP000002157">
    <property type="component" value="Chromosome"/>
</dbReference>
<dbReference type="GO" id="GO:0005829">
    <property type="term" value="C:cytosol"/>
    <property type="evidence" value="ECO:0007669"/>
    <property type="project" value="TreeGrafter"/>
</dbReference>
<dbReference type="GO" id="GO:0005524">
    <property type="term" value="F:ATP binding"/>
    <property type="evidence" value="ECO:0007669"/>
    <property type="project" value="UniProtKB-KW"/>
</dbReference>
<dbReference type="GO" id="GO:0004349">
    <property type="term" value="F:glutamate 5-kinase activity"/>
    <property type="evidence" value="ECO:0007669"/>
    <property type="project" value="UniProtKB-UniRule"/>
</dbReference>
<dbReference type="GO" id="GO:0003723">
    <property type="term" value="F:RNA binding"/>
    <property type="evidence" value="ECO:0007669"/>
    <property type="project" value="InterPro"/>
</dbReference>
<dbReference type="GO" id="GO:0055129">
    <property type="term" value="P:L-proline biosynthetic process"/>
    <property type="evidence" value="ECO:0007669"/>
    <property type="project" value="UniProtKB-UniRule"/>
</dbReference>
<dbReference type="CDD" id="cd04242">
    <property type="entry name" value="AAK_G5K_ProB"/>
    <property type="match status" value="1"/>
</dbReference>
<dbReference type="CDD" id="cd21157">
    <property type="entry name" value="PUA_G5K"/>
    <property type="match status" value="1"/>
</dbReference>
<dbReference type="FunFam" id="2.30.130.10:FF:000007">
    <property type="entry name" value="Glutamate 5-kinase"/>
    <property type="match status" value="1"/>
</dbReference>
<dbReference type="FunFam" id="3.40.1160.10:FF:000018">
    <property type="entry name" value="Glutamate 5-kinase"/>
    <property type="match status" value="1"/>
</dbReference>
<dbReference type="Gene3D" id="3.40.1160.10">
    <property type="entry name" value="Acetylglutamate kinase-like"/>
    <property type="match status" value="2"/>
</dbReference>
<dbReference type="Gene3D" id="2.30.130.10">
    <property type="entry name" value="PUA domain"/>
    <property type="match status" value="1"/>
</dbReference>
<dbReference type="HAMAP" id="MF_00456">
    <property type="entry name" value="ProB"/>
    <property type="match status" value="1"/>
</dbReference>
<dbReference type="InterPro" id="IPR036393">
    <property type="entry name" value="AceGlu_kinase-like_sf"/>
</dbReference>
<dbReference type="InterPro" id="IPR001048">
    <property type="entry name" value="Asp/Glu/Uridylate_kinase"/>
</dbReference>
<dbReference type="InterPro" id="IPR041739">
    <property type="entry name" value="G5K_ProB"/>
</dbReference>
<dbReference type="InterPro" id="IPR001057">
    <property type="entry name" value="Glu/AcGlu_kinase"/>
</dbReference>
<dbReference type="InterPro" id="IPR011529">
    <property type="entry name" value="Glu_5kinase"/>
</dbReference>
<dbReference type="InterPro" id="IPR005715">
    <property type="entry name" value="Glu_5kinase/COase_Synthase"/>
</dbReference>
<dbReference type="InterPro" id="IPR019797">
    <property type="entry name" value="Glutamate_5-kinase_CS"/>
</dbReference>
<dbReference type="InterPro" id="IPR002478">
    <property type="entry name" value="PUA"/>
</dbReference>
<dbReference type="InterPro" id="IPR015947">
    <property type="entry name" value="PUA-like_sf"/>
</dbReference>
<dbReference type="InterPro" id="IPR036974">
    <property type="entry name" value="PUA_sf"/>
</dbReference>
<dbReference type="NCBIfam" id="TIGR01027">
    <property type="entry name" value="proB"/>
    <property type="match status" value="1"/>
</dbReference>
<dbReference type="PANTHER" id="PTHR43654">
    <property type="entry name" value="GLUTAMATE 5-KINASE"/>
    <property type="match status" value="1"/>
</dbReference>
<dbReference type="PANTHER" id="PTHR43654:SF1">
    <property type="entry name" value="ISOPENTENYL PHOSPHATE KINASE"/>
    <property type="match status" value="1"/>
</dbReference>
<dbReference type="Pfam" id="PF00696">
    <property type="entry name" value="AA_kinase"/>
    <property type="match status" value="1"/>
</dbReference>
<dbReference type="Pfam" id="PF01472">
    <property type="entry name" value="PUA"/>
    <property type="match status" value="1"/>
</dbReference>
<dbReference type="PIRSF" id="PIRSF000729">
    <property type="entry name" value="GK"/>
    <property type="match status" value="1"/>
</dbReference>
<dbReference type="PRINTS" id="PR00474">
    <property type="entry name" value="GLU5KINASE"/>
</dbReference>
<dbReference type="SMART" id="SM00359">
    <property type="entry name" value="PUA"/>
    <property type="match status" value="1"/>
</dbReference>
<dbReference type="SUPFAM" id="SSF53633">
    <property type="entry name" value="Carbamate kinase-like"/>
    <property type="match status" value="1"/>
</dbReference>
<dbReference type="SUPFAM" id="SSF88697">
    <property type="entry name" value="PUA domain-like"/>
    <property type="match status" value="1"/>
</dbReference>
<dbReference type="PROSITE" id="PS00902">
    <property type="entry name" value="GLUTAMATE_5_KINASE"/>
    <property type="match status" value="1"/>
</dbReference>
<dbReference type="PROSITE" id="PS50890">
    <property type="entry name" value="PUA"/>
    <property type="match status" value="1"/>
</dbReference>